<gene>
    <name evidence="5 6" type="primary">WLIM1</name>
    <name evidence="8" type="ordered locus">At1g10200</name>
    <name evidence="9" type="ORF">F14N23.8</name>
</gene>
<name>WLIM1_ARATH</name>
<feature type="initiator methionine" description="Removed" evidence="11">
    <location>
        <position position="1"/>
    </location>
</feature>
<feature type="chain" id="PRO_0000430592" description="LIM domain-containing protein WLIM1">
    <location>
        <begin position="2"/>
        <end position="190"/>
    </location>
</feature>
<feature type="domain" description="LIM zinc-binding 1" evidence="1">
    <location>
        <begin position="8"/>
        <end position="68"/>
    </location>
</feature>
<feature type="domain" description="LIM zinc-binding 2" evidence="1">
    <location>
        <begin position="108"/>
        <end position="168"/>
    </location>
</feature>
<feature type="region of interest" description="Disordered" evidence="2">
    <location>
        <begin position="74"/>
        <end position="98"/>
    </location>
</feature>
<feature type="compositionally biased region" description="Basic and acidic residues" evidence="2">
    <location>
        <begin position="83"/>
        <end position="95"/>
    </location>
</feature>
<feature type="modified residue" description="N-acetylalanine" evidence="11">
    <location>
        <position position="2"/>
    </location>
</feature>
<comment type="function">
    <text evidence="4">Binds to actin filaments and promotes cross-linking into thick bundles. Has an actin-stabilizing activity. The actin regulatory activities are not regulated by pH and [Ca(2+)].</text>
</comment>
<comment type="subunit">
    <text evidence="4">Interacts with F-actin.</text>
</comment>
<comment type="subcellular location">
    <subcellularLocation>
        <location evidence="4">Cytoplasm</location>
        <location evidence="4">Cytoskeleton</location>
    </subcellularLocation>
</comment>
<comment type="tissue specificity">
    <text evidence="3 4">Expressed in roots, leaves, stems, flowers and siliques. Not detected in pollen.</text>
</comment>
<comment type="miscellaneous">
    <text evidence="4">Cross-links actin with a constant of dissociation of 0.4 uM.</text>
</comment>
<comment type="sequence caution">
    <conflict type="erroneous gene model prediction">
        <sequence resource="EMBL-CDS" id="AAD32870"/>
    </conflict>
</comment>
<proteinExistence type="evidence at protein level"/>
<sequence length="190" mass="21040">MAFAGTTQKCMACDKTVYLVDKLTADNRVYHKACFRCHHCKGTLKLSNYNSFEGVLYCRPHFDQNFKRTGSLEKSFEGTPKIGKPDRPLEGERPAGTKVSNMFGGTREKCVGCDKTVYPIEKVSVNGTLYHKSCFKCTHGGCTISPSNYIAHEGKLYCKHHHIQLIKEKGNLSQLEGGGENAAKDKVVAA</sequence>
<accession>Q94JX5</accession>
<accession>Q9SY62</accession>
<organism evidence="10">
    <name type="scientific">Arabidopsis thaliana</name>
    <name type="common">Mouse-ear cress</name>
    <dbReference type="NCBI Taxonomy" id="3702"/>
    <lineage>
        <taxon>Eukaryota</taxon>
        <taxon>Viridiplantae</taxon>
        <taxon>Streptophyta</taxon>
        <taxon>Embryophyta</taxon>
        <taxon>Tracheophyta</taxon>
        <taxon>Spermatophyta</taxon>
        <taxon>Magnoliopsida</taxon>
        <taxon>eudicotyledons</taxon>
        <taxon>Gunneridae</taxon>
        <taxon>Pentapetalae</taxon>
        <taxon>rosids</taxon>
        <taxon>malvids</taxon>
        <taxon>Brassicales</taxon>
        <taxon>Brassicaceae</taxon>
        <taxon>Camelineae</taxon>
        <taxon>Arabidopsis</taxon>
    </lineage>
</organism>
<keyword id="KW-0007">Acetylation</keyword>
<keyword id="KW-0009">Actin-binding</keyword>
<keyword id="KW-0963">Cytoplasm</keyword>
<keyword id="KW-0206">Cytoskeleton</keyword>
<keyword id="KW-0440">LIM domain</keyword>
<keyword id="KW-0479">Metal-binding</keyword>
<keyword id="KW-1185">Reference proteome</keyword>
<keyword id="KW-0677">Repeat</keyword>
<keyword id="KW-0862">Zinc</keyword>
<protein>
    <recommendedName>
        <fullName evidence="7">LIM domain-containing protein WLIM1</fullName>
    </recommendedName>
    <alternativeName>
        <fullName evidence="5">Widely-expressed LIM protein 1</fullName>
        <shortName>AtWLIM1</shortName>
    </alternativeName>
</protein>
<reference key="1">
    <citation type="journal article" date="2000" name="Nature">
        <title>Sequence and analysis of chromosome 1 of the plant Arabidopsis thaliana.</title>
        <authorList>
            <person name="Theologis A."/>
            <person name="Ecker J.R."/>
            <person name="Palm C.J."/>
            <person name="Federspiel N.A."/>
            <person name="Kaul S."/>
            <person name="White O."/>
            <person name="Alonso J."/>
            <person name="Altafi H."/>
            <person name="Araujo R."/>
            <person name="Bowman C.L."/>
            <person name="Brooks S.Y."/>
            <person name="Buehler E."/>
            <person name="Chan A."/>
            <person name="Chao Q."/>
            <person name="Chen H."/>
            <person name="Cheuk R.F."/>
            <person name="Chin C.W."/>
            <person name="Chung M.K."/>
            <person name="Conn L."/>
            <person name="Conway A.B."/>
            <person name="Conway A.R."/>
            <person name="Creasy T.H."/>
            <person name="Dewar K."/>
            <person name="Dunn P."/>
            <person name="Etgu P."/>
            <person name="Feldblyum T.V."/>
            <person name="Feng J.-D."/>
            <person name="Fong B."/>
            <person name="Fujii C.Y."/>
            <person name="Gill J.E."/>
            <person name="Goldsmith A.D."/>
            <person name="Haas B."/>
            <person name="Hansen N.F."/>
            <person name="Hughes B."/>
            <person name="Huizar L."/>
            <person name="Hunter J.L."/>
            <person name="Jenkins J."/>
            <person name="Johnson-Hopson C."/>
            <person name="Khan S."/>
            <person name="Khaykin E."/>
            <person name="Kim C.J."/>
            <person name="Koo H.L."/>
            <person name="Kremenetskaia I."/>
            <person name="Kurtz D.B."/>
            <person name="Kwan A."/>
            <person name="Lam B."/>
            <person name="Langin-Hooper S."/>
            <person name="Lee A."/>
            <person name="Lee J.M."/>
            <person name="Lenz C.A."/>
            <person name="Li J.H."/>
            <person name="Li Y.-P."/>
            <person name="Lin X."/>
            <person name="Liu S.X."/>
            <person name="Liu Z.A."/>
            <person name="Luros J.S."/>
            <person name="Maiti R."/>
            <person name="Marziali A."/>
            <person name="Militscher J."/>
            <person name="Miranda M."/>
            <person name="Nguyen M."/>
            <person name="Nierman W.C."/>
            <person name="Osborne B.I."/>
            <person name="Pai G."/>
            <person name="Peterson J."/>
            <person name="Pham P.K."/>
            <person name="Rizzo M."/>
            <person name="Rooney T."/>
            <person name="Rowley D."/>
            <person name="Sakano H."/>
            <person name="Salzberg S.L."/>
            <person name="Schwartz J.R."/>
            <person name="Shinn P."/>
            <person name="Southwick A.M."/>
            <person name="Sun H."/>
            <person name="Tallon L.J."/>
            <person name="Tambunga G."/>
            <person name="Toriumi M.J."/>
            <person name="Town C.D."/>
            <person name="Utterback T."/>
            <person name="Van Aken S."/>
            <person name="Vaysberg M."/>
            <person name="Vysotskaia V.S."/>
            <person name="Walker M."/>
            <person name="Wu D."/>
            <person name="Yu G."/>
            <person name="Fraser C.M."/>
            <person name="Venter J.C."/>
            <person name="Davis R.W."/>
        </authorList>
    </citation>
    <scope>NUCLEOTIDE SEQUENCE [LARGE SCALE GENOMIC DNA]</scope>
    <source>
        <strain>cv. Columbia</strain>
    </source>
</reference>
<reference key="2">
    <citation type="journal article" date="2017" name="Plant J.">
        <title>Araport11: a complete reannotation of the Arabidopsis thaliana reference genome.</title>
        <authorList>
            <person name="Cheng C.Y."/>
            <person name="Krishnakumar V."/>
            <person name="Chan A.P."/>
            <person name="Thibaud-Nissen F."/>
            <person name="Schobel S."/>
            <person name="Town C.D."/>
        </authorList>
    </citation>
    <scope>GENOME REANNOTATION</scope>
    <source>
        <strain>cv. Columbia</strain>
    </source>
</reference>
<reference key="3">
    <citation type="submission" date="2002-03" db="EMBL/GenBank/DDBJ databases">
        <title>Full-length cDNA from Arabidopsis thaliana.</title>
        <authorList>
            <person name="Brover V.V."/>
            <person name="Troukhan M.E."/>
            <person name="Alexandrov N.A."/>
            <person name="Lu Y.-P."/>
            <person name="Flavell R.B."/>
            <person name="Feldmann K.A."/>
        </authorList>
    </citation>
    <scope>NUCLEOTIDE SEQUENCE [LARGE SCALE MRNA]</scope>
</reference>
<reference key="4">
    <citation type="journal article" date="2000" name="Mol. Gen. Genet.">
        <title>Molecular and expression analysis of a LIM protein gene family from flowering plants.</title>
        <authorList>
            <person name="Eliasson A."/>
            <person name="Gass N."/>
            <person name="Mundel C."/>
            <person name="Baltz R."/>
            <person name="Kraeuter R."/>
            <person name="Evrard J.L."/>
            <person name="Steinmetz A."/>
        </authorList>
    </citation>
    <scope>TISSUE SPECIFICITY</scope>
</reference>
<reference key="5">
    <citation type="journal article" date="2007" name="DNA Res.">
        <title>Genome-wide analysis of LIM gene family in Populus trichocarpa, Arabidopsis thaliana, and Oryza sativa.</title>
        <authorList>
            <person name="Arnaud D."/>
            <person name="Dejardin A."/>
            <person name="Leple J.C."/>
            <person name="Lesage-Descauses M.C."/>
            <person name="Pilate G."/>
        </authorList>
    </citation>
    <scope>GENE FAMILY</scope>
    <scope>NOMENCLATURE</scope>
</reference>
<reference key="6">
    <citation type="journal article" date="2010" name="Plant Cell">
        <title>Arabidopsis LIM proteins: a family of actin bundlers with distinct expression patterns and modes of regulation.</title>
        <authorList>
            <person name="Papuga J."/>
            <person name="Hoffmann C."/>
            <person name="Dieterle M."/>
            <person name="Moes D."/>
            <person name="Moreau F."/>
            <person name="Tholl S."/>
            <person name="Steinmetz A."/>
            <person name="Thomas C."/>
        </authorList>
    </citation>
    <scope>FUNCTION</scope>
    <scope>TISSUE SPECIFICITY</scope>
    <scope>SUBCELLULAR LOCATION</scope>
    <scope>INTERACTION WITH F-ACTIN</scope>
</reference>
<reference key="7">
    <citation type="journal article" date="2012" name="Mol. Cell. Proteomics">
        <title>Comparative large-scale characterisation of plant vs. mammal proteins reveals similar and idiosyncratic N-alpha acetylation features.</title>
        <authorList>
            <person name="Bienvenut W.V."/>
            <person name="Sumpton D."/>
            <person name="Martinez A."/>
            <person name="Lilla S."/>
            <person name="Espagne C."/>
            <person name="Meinnel T."/>
            <person name="Giglione C."/>
        </authorList>
    </citation>
    <scope>ACETYLATION [LARGE SCALE ANALYSIS] AT ALA-2</scope>
    <scope>CLEAVAGE OF INITIATOR METHIONINE [LARGE SCALE ANALYSIS]</scope>
    <scope>IDENTIFICATION BY MASS SPECTROMETRY [LARGE SCALE ANALYSIS]</scope>
</reference>
<evidence type="ECO:0000255" key="1">
    <source>
        <dbReference type="PROSITE-ProRule" id="PRU00125"/>
    </source>
</evidence>
<evidence type="ECO:0000256" key="2">
    <source>
        <dbReference type="SAM" id="MobiDB-lite"/>
    </source>
</evidence>
<evidence type="ECO:0000269" key="3">
    <source>
    </source>
</evidence>
<evidence type="ECO:0000269" key="4">
    <source>
    </source>
</evidence>
<evidence type="ECO:0000303" key="5">
    <source>
    </source>
</evidence>
<evidence type="ECO:0000303" key="6">
    <source>
    </source>
</evidence>
<evidence type="ECO:0000305" key="7"/>
<evidence type="ECO:0000312" key="8">
    <source>
        <dbReference type="Araport" id="AT1G10200"/>
    </source>
</evidence>
<evidence type="ECO:0000312" key="9">
    <source>
        <dbReference type="EMBL" id="AAD32870.1"/>
    </source>
</evidence>
<evidence type="ECO:0000312" key="10">
    <source>
        <dbReference type="EMBL" id="AAK49575.1"/>
    </source>
</evidence>
<evidence type="ECO:0007744" key="11">
    <source>
    </source>
</evidence>
<dbReference type="EMBL" id="AC005489">
    <property type="protein sequence ID" value="AAD32870.1"/>
    <property type="status" value="ALT_SEQ"/>
    <property type="molecule type" value="Genomic_DNA"/>
</dbReference>
<dbReference type="EMBL" id="CP002684">
    <property type="protein sequence ID" value="AEE28552.1"/>
    <property type="molecule type" value="Genomic_DNA"/>
</dbReference>
<dbReference type="EMBL" id="AF370569">
    <property type="protein sequence ID" value="AAK49575.1"/>
    <property type="molecule type" value="mRNA"/>
</dbReference>
<dbReference type="EMBL" id="AY085377">
    <property type="protein sequence ID" value="AAM62606.1"/>
    <property type="molecule type" value="mRNA"/>
</dbReference>
<dbReference type="RefSeq" id="NP_172491.1">
    <property type="nucleotide sequence ID" value="NM_100894.4"/>
</dbReference>
<dbReference type="BioGRID" id="22798">
    <property type="interactions" value="8"/>
</dbReference>
<dbReference type="FunCoup" id="Q94JX5">
    <property type="interactions" value="847"/>
</dbReference>
<dbReference type="IntAct" id="Q94JX5">
    <property type="interactions" value="6"/>
</dbReference>
<dbReference type="STRING" id="3702.Q94JX5"/>
<dbReference type="iPTMnet" id="Q94JX5"/>
<dbReference type="MetOSite" id="Q94JX5"/>
<dbReference type="PaxDb" id="3702-AT1G10200.1"/>
<dbReference type="ProteomicsDB" id="242720"/>
<dbReference type="EnsemblPlants" id="AT1G10200.1">
    <property type="protein sequence ID" value="AT1G10200.1"/>
    <property type="gene ID" value="AT1G10200"/>
</dbReference>
<dbReference type="GeneID" id="837558"/>
<dbReference type="Gramene" id="AT1G10200.1">
    <property type="protein sequence ID" value="AT1G10200.1"/>
    <property type="gene ID" value="AT1G10200"/>
</dbReference>
<dbReference type="KEGG" id="ath:AT1G10200"/>
<dbReference type="Araport" id="AT1G10200"/>
<dbReference type="TAIR" id="AT1G10200">
    <property type="gene designation" value="WLIM1"/>
</dbReference>
<dbReference type="eggNOG" id="KOG1700">
    <property type="taxonomic scope" value="Eukaryota"/>
</dbReference>
<dbReference type="HOGENOM" id="CLU_026811_1_0_1"/>
<dbReference type="InParanoid" id="Q94JX5"/>
<dbReference type="OMA" id="PHCPTTN"/>
<dbReference type="OrthoDB" id="6129702at2759"/>
<dbReference type="PhylomeDB" id="Q94JX5"/>
<dbReference type="PRO" id="PR:Q94JX5"/>
<dbReference type="Proteomes" id="UP000006548">
    <property type="component" value="Chromosome 1"/>
</dbReference>
<dbReference type="ExpressionAtlas" id="Q94JX5">
    <property type="expression patterns" value="baseline and differential"/>
</dbReference>
<dbReference type="GO" id="GO:0005737">
    <property type="term" value="C:cytoplasm"/>
    <property type="evidence" value="ECO:0007669"/>
    <property type="project" value="UniProtKB-KW"/>
</dbReference>
<dbReference type="GO" id="GO:0005856">
    <property type="term" value="C:cytoskeleton"/>
    <property type="evidence" value="ECO:0007669"/>
    <property type="project" value="UniProtKB-SubCell"/>
</dbReference>
<dbReference type="GO" id="GO:0051015">
    <property type="term" value="F:actin filament binding"/>
    <property type="evidence" value="ECO:0000314"/>
    <property type="project" value="TAIR"/>
</dbReference>
<dbReference type="GO" id="GO:0046872">
    <property type="term" value="F:metal ion binding"/>
    <property type="evidence" value="ECO:0007669"/>
    <property type="project" value="UniProtKB-KW"/>
</dbReference>
<dbReference type="GO" id="GO:0003729">
    <property type="term" value="F:mRNA binding"/>
    <property type="evidence" value="ECO:0007005"/>
    <property type="project" value="TAIR"/>
</dbReference>
<dbReference type="GO" id="GO:0051017">
    <property type="term" value="P:actin filament bundle assembly"/>
    <property type="evidence" value="ECO:0000314"/>
    <property type="project" value="TAIR"/>
</dbReference>
<dbReference type="CDD" id="cd09440">
    <property type="entry name" value="LIM1_SF3"/>
    <property type="match status" value="1"/>
</dbReference>
<dbReference type="CDD" id="cd09441">
    <property type="entry name" value="LIM2_SF3"/>
    <property type="match status" value="1"/>
</dbReference>
<dbReference type="FunFam" id="2.10.110.10:FF:000002">
    <property type="entry name" value="LIM domain and actin-binding 1"/>
    <property type="match status" value="2"/>
</dbReference>
<dbReference type="Gene3D" id="2.10.110.10">
    <property type="entry name" value="Cysteine Rich Protein"/>
    <property type="match status" value="2"/>
</dbReference>
<dbReference type="InterPro" id="IPR001781">
    <property type="entry name" value="Znf_LIM"/>
</dbReference>
<dbReference type="PANTHER" id="PTHR24206">
    <property type="entry name" value="OS06G0237300 PROTEIN"/>
    <property type="match status" value="1"/>
</dbReference>
<dbReference type="Pfam" id="PF00412">
    <property type="entry name" value="LIM"/>
    <property type="match status" value="2"/>
</dbReference>
<dbReference type="SMART" id="SM00132">
    <property type="entry name" value="LIM"/>
    <property type="match status" value="2"/>
</dbReference>
<dbReference type="SUPFAM" id="SSF57716">
    <property type="entry name" value="Glucocorticoid receptor-like (DNA-binding domain)"/>
    <property type="match status" value="4"/>
</dbReference>
<dbReference type="PROSITE" id="PS00478">
    <property type="entry name" value="LIM_DOMAIN_1"/>
    <property type="match status" value="1"/>
</dbReference>
<dbReference type="PROSITE" id="PS50023">
    <property type="entry name" value="LIM_DOMAIN_2"/>
    <property type="match status" value="2"/>
</dbReference>